<evidence type="ECO:0000255" key="1"/>
<evidence type="ECO:0000255" key="2">
    <source>
        <dbReference type="PROSITE-ProRule" id="PRU00498"/>
    </source>
</evidence>
<evidence type="ECO:0000269" key="3">
    <source>
    </source>
</evidence>
<evidence type="ECO:0000269" key="4">
    <source>
    </source>
</evidence>
<evidence type="ECO:0000269" key="5">
    <source>
    </source>
</evidence>
<evidence type="ECO:0000269" key="6">
    <source ref="4"/>
</evidence>
<evidence type="ECO:0000303" key="7">
    <source>
    </source>
</evidence>
<evidence type="ECO:0000305" key="8"/>
<evidence type="ECO:0000305" key="9">
    <source>
    </source>
</evidence>
<name>EUPF_PHOSX</name>
<gene>
    <name evidence="7" type="primary">eupF</name>
    <name type="ORF">gme12633</name>
</gene>
<feature type="signal peptide" evidence="1">
    <location>
        <begin position="1"/>
        <end position="20"/>
    </location>
</feature>
<feature type="chain" id="PRO_5020871144" description="Putative hetero-Diels-Alderase">
    <location>
        <begin position="21"/>
        <end position="352"/>
    </location>
</feature>
<feature type="glycosylation site" description="N-linked (GlcNAc...) asparagine" evidence="2">
    <location>
        <position position="26"/>
    </location>
</feature>
<feature type="glycosylation site" description="N-linked (GlcNAc...) asparagine" evidence="2">
    <location>
        <position position="41"/>
    </location>
</feature>
<feature type="glycosylation site" description="N-linked (GlcNAc...) asparagine" evidence="2">
    <location>
        <position position="47"/>
    </location>
</feature>
<feature type="glycosylation site" description="N-linked (GlcNAc...) asparagine" evidence="2">
    <location>
        <position position="135"/>
    </location>
</feature>
<feature type="glycosylation site" description="N-linked (GlcNAc...) asparagine" evidence="2">
    <location>
        <position position="211"/>
    </location>
</feature>
<feature type="glycosylation site" description="N-linked (GlcNAc...) asparagine" evidence="2">
    <location>
        <position position="310"/>
    </location>
</feature>
<keyword id="KW-0325">Glycoprotein</keyword>
<keyword id="KW-0413">Isomerase</keyword>
<keyword id="KW-0732">Signal</keyword>
<protein>
    <recommendedName>
        <fullName evidence="7">Putative hetero-Diels-Alderase</fullName>
        <ecNumber evidence="9">5.5.-.-</ecNumber>
    </recommendedName>
    <alternativeName>
        <fullName evidence="7">Eupenifeldin biosynthesis cluster protein F</fullName>
    </alternativeName>
</protein>
<proteinExistence type="evidence at protein level"/>
<accession>A0A4P8GEA3</accession>
<reference key="1">
    <citation type="journal article" date="2019" name="Fungal Genet. Biol.">
        <title>Identification of the gene cluster for bistropolone-humulene meroterpenoid biosynthesis in Phoma sp.</title>
        <authorList>
            <person name="Zhai Y."/>
            <person name="Li Y."/>
            <person name="Zhang J."/>
            <person name="Zhang Y."/>
            <person name="Ren F."/>
            <person name="Zhang X."/>
            <person name="Liu G."/>
            <person name="Liu X."/>
            <person name="Che Y."/>
        </authorList>
    </citation>
    <scope>NUCLEOTIDE SEQUENCE [GENOMIC DNA]</scope>
    <scope>FUNCTION</scope>
    <scope>DISRUPTION PHENOTYPE</scope>
    <scope>PATHWAY</scope>
    <source>
        <strain>XZ068 / CGMCC No. 10481</strain>
    </source>
</reference>
<reference key="2">
    <citation type="journal article" date="1993" name="J. Antibiot.">
        <title>Eupenifeldin, a novel cytotoxic bistropolone from Eupenicillium brefeldianum.</title>
        <authorList>
            <person name="Mayerl F."/>
            <person name="Gao Q."/>
            <person name="Huang S."/>
            <person name="Klohr S.E."/>
            <person name="Matson J.A."/>
            <person name="Gustavson D.R."/>
            <person name="Pirnik D.M."/>
            <person name="Berry R.L."/>
            <person name="Fairchild C."/>
            <person name="Rose W.C."/>
        </authorList>
    </citation>
    <scope>BIOTECHNOLOGY</scope>
</reference>
<reference key="3">
    <citation type="journal article" date="2008" name="J. Nat. Prod.">
        <title>Noreupenifeldin, a tropolone from an unidentified ascomycete.</title>
        <authorList>
            <person name="Ayers S."/>
            <person name="Zink D.L."/>
            <person name="Powell J.S."/>
            <person name="Brown C.M."/>
            <person name="Grund A."/>
            <person name="Bills G.F."/>
            <person name="Platas G."/>
            <person name="Thompson D."/>
            <person name="Singh S.B."/>
        </authorList>
    </citation>
    <scope>BIOTECHNOLOGY</scope>
</reference>
<reference key="4">
    <citation type="journal article" date="2008" name="Phytochem. Lett.">
        <title>Ramiferin, a bisphenol-sesquiterpene from the fungus Kionochaeta ramifera BCC 7585.</title>
        <authorList>
            <person name="Bunyapaiboonsri T."/>
            <person name="Veeranondha S."/>
            <person name="Boonruangprapa T."/>
            <person name="Somrithipol S."/>
        </authorList>
    </citation>
    <scope>BIOTECHNOLOGY</scope>
</reference>
<sequence length="352" mass="39140">MRYHLSALVLVFTAFRETLTAPTPGNNTIPLPNRLLHQWPNGTWVENISVRPNGNLLVTTSTPDGSVWQVKEPWKENPEVERVFNFDEWVDRLIGIGETQDDKYVVVGSRFYSTDAQSSHVARTFCAMELDFSGNTTEPSARLIAWMPESYLLQGVAALPWDRDTVLISDQYVLRPRAVQIDWTPSPGQIWVLDTRTGEYGLVMTDYAELNTTYAKGPDVGIDGIKIRDHDLFWVNQDDSGIYRVKIDDAGVPVAPVKPQLVASYNTMWDDMAFDPFNENVIWATGLNAVFAATLDGQIVPVDGVGTSDNLTLPGPTACAFGRTEKDKSILYVTGNLLTVPESLLDVKLGGW</sequence>
<dbReference type="EC" id="5.5.-.-" evidence="9"/>
<dbReference type="EMBL" id="MK400120">
    <property type="protein sequence ID" value="QCO93111.1"/>
    <property type="molecule type" value="Genomic_DNA"/>
</dbReference>
<dbReference type="SMR" id="A0A4P8GEA3"/>
<dbReference type="GlyCosmos" id="A0A4P8GEA3">
    <property type="glycosylation" value="6 sites, No reported glycans"/>
</dbReference>
<dbReference type="UniPathway" id="UPA00213"/>
<dbReference type="GO" id="GO:0016853">
    <property type="term" value="F:isomerase activity"/>
    <property type="evidence" value="ECO:0007669"/>
    <property type="project" value="UniProtKB-KW"/>
</dbReference>
<dbReference type="GO" id="GO:0016114">
    <property type="term" value="P:terpenoid biosynthetic process"/>
    <property type="evidence" value="ECO:0007669"/>
    <property type="project" value="UniProtKB-UniPathway"/>
</dbReference>
<dbReference type="Gene3D" id="2.120.10.30">
    <property type="entry name" value="TolB, C-terminal domain"/>
    <property type="match status" value="1"/>
</dbReference>
<dbReference type="InterPro" id="IPR011042">
    <property type="entry name" value="6-blade_b-propeller_TolB-like"/>
</dbReference>
<dbReference type="InterPro" id="IPR052998">
    <property type="entry name" value="Hetero-Diels-Alderase-like"/>
</dbReference>
<dbReference type="PANTHER" id="PTHR42060:SF1">
    <property type="entry name" value="NHL REPEAT-CONTAINING PROTEIN"/>
    <property type="match status" value="1"/>
</dbReference>
<dbReference type="PANTHER" id="PTHR42060">
    <property type="entry name" value="NHL REPEAT-CONTAINING PROTEIN-RELATED"/>
    <property type="match status" value="1"/>
</dbReference>
<dbReference type="SUPFAM" id="SSF63829">
    <property type="entry name" value="Calcium-dependent phosphotriesterase"/>
    <property type="match status" value="1"/>
</dbReference>
<comment type="function">
    <text evidence="4 9">Putative hetero-Diels-Alderase; part of the gene cluster that mediates the biosynthesis of eupenifeldin, a bistropolone meroterpenoid that acts as an antitumor agent (PubMed:30980906). The first step of eupenifeldin biosynthesis is the biosynthesis of 3-methylorcinaldehyde performed by the non-reducing polyketide synthase eupA (PubMed:30980906). Oxidative dearomatization of 3-methylorcinaldehyde likely catalyzed by the FAD-dependent monooxygenase eupB is followed by oxidative ring expansion by the 2-oxoglutarate-dependent dioxygenase eupC to provide the first tropolone metabolite, tropolone stipitaldehyde (Probable). In parallel, generation of sesquiterpene alpha-humulene from farnesylpyrophosphate (FPP) is catalyzed by the terpene cyclase eupE (PubMed:30980906). The cytochrome P450 monooxygenase eupD then hydroxylates humulene to humulenol (PubMed:30980906). The putative Diels-Alderase eupF probably catalyzes the formation of the tropolone-humulene skeleton by linking humulenol and the polyketide moiety (Probable). The short-chain dehydrogenase/reductase eupG and the flavin-dependent monooxygenase eupH are also essential for eupenifeldin biosynthesis and are likely the additional decorating enzymes of the tropolone-humulene skeleton to produce final eupenifeldin or derivatives (Probable).</text>
</comment>
<comment type="pathway">
    <text evidence="4">Secondary metabolite biosynthesis; terpenoid biosynthesis.</text>
</comment>
<comment type="disruption phenotype">
    <text evidence="4">Abolishes the production of eupenifeldin.</text>
</comment>
<comment type="biotechnology">
    <text evidence="3 5 6">Eupenifeldin is a bistropolone-humulene meroterpenoid first discovered as an antitumor and anti-leukemia agent (PubMed:8360103). This metabolite also shows anthelmintic activity against the parasitic worm Hemonchus contortus, anti-malarial activity as well as antifungal activity (PubMed:18095654, Ref.4).</text>
</comment>
<comment type="similarity">
    <text evidence="8">Belongs to the eupF Diels-Alderase family.</text>
</comment>
<organism>
    <name type="scientific">Phoma sp</name>
    <dbReference type="NCBI Taxonomy" id="1707701"/>
    <lineage>
        <taxon>Eukaryota</taxon>
        <taxon>Fungi</taxon>
        <taxon>Dikarya</taxon>
        <taxon>Ascomycota</taxon>
        <taxon>Pezizomycotina</taxon>
        <taxon>Dothideomycetes</taxon>
        <taxon>Pleosporomycetidae</taxon>
        <taxon>Pleosporales</taxon>
        <taxon>Pleosporineae</taxon>
        <taxon>Didymellaceae</taxon>
        <taxon>Phoma</taxon>
    </lineage>
</organism>